<organism>
    <name type="scientific">Arabidopsis thaliana</name>
    <name type="common">Mouse-ear cress</name>
    <dbReference type="NCBI Taxonomy" id="3702"/>
    <lineage>
        <taxon>Eukaryota</taxon>
        <taxon>Viridiplantae</taxon>
        <taxon>Streptophyta</taxon>
        <taxon>Embryophyta</taxon>
        <taxon>Tracheophyta</taxon>
        <taxon>Spermatophyta</taxon>
        <taxon>Magnoliopsida</taxon>
        <taxon>eudicotyledons</taxon>
        <taxon>Gunneridae</taxon>
        <taxon>Pentapetalae</taxon>
        <taxon>rosids</taxon>
        <taxon>malvids</taxon>
        <taxon>Brassicales</taxon>
        <taxon>Brassicaceae</taxon>
        <taxon>Camelineae</taxon>
        <taxon>Arabidopsis</taxon>
    </lineage>
</organism>
<comment type="function">
    <text evidence="4">Exonuclease that digests recessed strands of DNA duplexes in the 3' to 5' direction but hardly single-stranded DNA or blunt-ended duplexes. Also able to digest 3'-protruding strands and 3'-recessed strand termini of duplexes containing mismatched bases.</text>
</comment>
<comment type="cofactor">
    <cofactor evidence="4">
        <name>Mg(2+)</name>
        <dbReference type="ChEBI" id="CHEBI:18420"/>
    </cofactor>
    <cofactor evidence="4">
        <name>Mn(2+)</name>
        <dbReference type="ChEBI" id="CHEBI:29035"/>
    </cofactor>
</comment>
<comment type="activity regulation">
    <text evidence="5">Activated upon interaction with the KU heterodimer. Not stimulated by ATP.</text>
</comment>
<comment type="subunit">
    <text evidence="2 5">Interacts with KU70 and KU80. Interacts with RECQL2.</text>
</comment>
<comment type="interaction">
    <interactant intactId="EBI-926580">
        <id>Q84LH3</id>
    </interactant>
    <interactant intactId="EBI-476083">
        <id>Q9FQ08</id>
        <label>KU70</label>
    </interactant>
    <organismsDiffer>false</organismsDiffer>
    <experiments>2</experiments>
</comment>
<comment type="interaction">
    <interactant intactId="EBI-926580">
        <id>Q84LH3</id>
    </interactant>
    <interactant intactId="EBI-926593">
        <id>Q9FQ09</id>
        <label>KU80</label>
    </interactant>
    <organismsDiffer>false</organismsDiffer>
    <experiments>2</experiments>
</comment>
<comment type="subcellular location">
    <subcellularLocation>
        <location evidence="8">Nucleus</location>
    </subcellularLocation>
</comment>
<comment type="alternative products">
    <event type="alternative splicing"/>
    <isoform>
        <id>Q84LH3-1</id>
        <name>1</name>
        <sequence type="displayed"/>
    </isoform>
    <isoform>
        <id>Q84LH3-2</id>
        <name>2</name>
        <sequence type="described" ref="VSP_039138"/>
    </isoform>
</comment>
<comment type="tissue specificity">
    <text evidence="2">Expressed ubiquitously.</text>
</comment>
<comment type="disruption phenotype">
    <text evidence="3">Early flowering. Loss of post-transcriptional gene silencing (PTGS), but not of transcriptional gene silencing (TGS).</text>
</comment>
<comment type="miscellaneous">
    <text>Helix-distorting lesions (apurinic sites and cholesterol adducts) and oxidative DNA damage (such as 8-oxoadenine and 8-oxoguanine) block the exonuclease activity, while other DNA modifications such as uracil, hypoxanthine or ethenoadenine have no effects.</text>
</comment>
<comment type="sequence caution" evidence="8">
    <conflict type="erroneous gene model prediction">
        <sequence resource="EMBL-CDS" id="CAB36851"/>
    </conflict>
</comment>
<comment type="sequence caution" evidence="8">
    <conflict type="erroneous gene model prediction">
        <sequence resource="EMBL-CDS" id="CAB78429"/>
    </conflict>
</comment>
<feature type="chain" id="PRO_0000394132" description="3'-5' exonuclease">
    <location>
        <begin position="1"/>
        <end position="288"/>
    </location>
</feature>
<feature type="domain" description="3'-5' exonuclease">
    <location>
        <begin position="129"/>
        <end position="279"/>
    </location>
</feature>
<feature type="region of interest" description="Disordered" evidence="1">
    <location>
        <begin position="30"/>
        <end position="67"/>
    </location>
</feature>
<feature type="compositionally biased region" description="Polar residues" evidence="1">
    <location>
        <begin position="38"/>
        <end position="48"/>
    </location>
</feature>
<feature type="compositionally biased region" description="Polar residues" evidence="1">
    <location>
        <begin position="57"/>
        <end position="67"/>
    </location>
</feature>
<feature type="splice variant" id="VSP_039138" description="In isoform 2." evidence="6">
    <location>
        <begin position="276"/>
        <end position="278"/>
    </location>
</feature>
<feature type="mutagenesis site" description="Loss of exonucleolytic activity." evidence="4">
    <original>E</original>
    <variation>A</variation>
    <location>
        <position position="135"/>
    </location>
</feature>
<reference key="1">
    <citation type="journal article" date="2000" name="Nucleic Acids Res.">
        <title>Molecular characterisation of RecQ homologues in Arabidopsis thaliana.</title>
        <authorList>
            <person name="Hartung F."/>
            <person name="Plchova H."/>
            <person name="Puchta H."/>
        </authorList>
    </citation>
    <scope>NUCLEOTIDE SEQUENCE [MRNA] (ISOFORM 2)</scope>
    <scope>TISSUE SPECIFICITY</scope>
    <scope>INTERACTION WITH RECQL2</scope>
</reference>
<reference key="2">
    <citation type="journal article" date="2003" name="Plant J.">
        <title>A gene encoding an RNase D exonuclease-like protein is required for post-transcriptional silencing in Arabidopsis.</title>
        <authorList>
            <person name="Glazov E."/>
            <person name="Phillips K."/>
            <person name="Budziszewski G.J."/>
            <person name="Schob H."/>
            <person name="Meins F. Jr."/>
            <person name="Levin J.Z."/>
        </authorList>
    </citation>
    <scope>NUCLEOTIDE SEQUENCE [MRNA] (ISOFORM 1)</scope>
    <scope>DISRUPTION PHENOTYPE</scope>
</reference>
<reference key="3">
    <citation type="journal article" date="1999" name="Nature">
        <title>Sequence and analysis of chromosome 4 of the plant Arabidopsis thaliana.</title>
        <authorList>
            <person name="Mayer K.F.X."/>
            <person name="Schueller C."/>
            <person name="Wambutt R."/>
            <person name="Murphy G."/>
            <person name="Volckaert G."/>
            <person name="Pohl T."/>
            <person name="Duesterhoeft A."/>
            <person name="Stiekema W."/>
            <person name="Entian K.-D."/>
            <person name="Terryn N."/>
            <person name="Harris B."/>
            <person name="Ansorge W."/>
            <person name="Brandt P."/>
            <person name="Grivell L.A."/>
            <person name="Rieger M."/>
            <person name="Weichselgartner M."/>
            <person name="de Simone V."/>
            <person name="Obermaier B."/>
            <person name="Mache R."/>
            <person name="Mueller M."/>
            <person name="Kreis M."/>
            <person name="Delseny M."/>
            <person name="Puigdomenech P."/>
            <person name="Watson M."/>
            <person name="Schmidtheini T."/>
            <person name="Reichert B."/>
            <person name="Portetelle D."/>
            <person name="Perez-Alonso M."/>
            <person name="Boutry M."/>
            <person name="Bancroft I."/>
            <person name="Vos P."/>
            <person name="Hoheisel J."/>
            <person name="Zimmermann W."/>
            <person name="Wedler H."/>
            <person name="Ridley P."/>
            <person name="Langham S.-A."/>
            <person name="McCullagh B."/>
            <person name="Bilham L."/>
            <person name="Robben J."/>
            <person name="van der Schueren J."/>
            <person name="Grymonprez B."/>
            <person name="Chuang Y.-J."/>
            <person name="Vandenbussche F."/>
            <person name="Braeken M."/>
            <person name="Weltjens I."/>
            <person name="Voet M."/>
            <person name="Bastiaens I."/>
            <person name="Aert R."/>
            <person name="Defoor E."/>
            <person name="Weitzenegger T."/>
            <person name="Bothe G."/>
            <person name="Ramsperger U."/>
            <person name="Hilbert H."/>
            <person name="Braun M."/>
            <person name="Holzer E."/>
            <person name="Brandt A."/>
            <person name="Peters S."/>
            <person name="van Staveren M."/>
            <person name="Dirkse W."/>
            <person name="Mooijman P."/>
            <person name="Klein Lankhorst R."/>
            <person name="Rose M."/>
            <person name="Hauf J."/>
            <person name="Koetter P."/>
            <person name="Berneiser S."/>
            <person name="Hempel S."/>
            <person name="Feldpausch M."/>
            <person name="Lamberth S."/>
            <person name="Van den Daele H."/>
            <person name="De Keyser A."/>
            <person name="Buysshaert C."/>
            <person name="Gielen J."/>
            <person name="Villarroel R."/>
            <person name="De Clercq R."/>
            <person name="van Montagu M."/>
            <person name="Rogers J."/>
            <person name="Cronin A."/>
            <person name="Quail M.A."/>
            <person name="Bray-Allen S."/>
            <person name="Clark L."/>
            <person name="Doggett J."/>
            <person name="Hall S."/>
            <person name="Kay M."/>
            <person name="Lennard N."/>
            <person name="McLay K."/>
            <person name="Mayes R."/>
            <person name="Pettett A."/>
            <person name="Rajandream M.A."/>
            <person name="Lyne M."/>
            <person name="Benes V."/>
            <person name="Rechmann S."/>
            <person name="Borkova D."/>
            <person name="Bloecker H."/>
            <person name="Scharfe M."/>
            <person name="Grimm M."/>
            <person name="Loehnert T.-H."/>
            <person name="Dose S."/>
            <person name="de Haan M."/>
            <person name="Maarse A.C."/>
            <person name="Schaefer M."/>
            <person name="Mueller-Auer S."/>
            <person name="Gabel C."/>
            <person name="Fuchs M."/>
            <person name="Fartmann B."/>
            <person name="Granderath K."/>
            <person name="Dauner D."/>
            <person name="Herzl A."/>
            <person name="Neumann S."/>
            <person name="Argiriou A."/>
            <person name="Vitale D."/>
            <person name="Liguori R."/>
            <person name="Piravandi E."/>
            <person name="Massenet O."/>
            <person name="Quigley F."/>
            <person name="Clabauld G."/>
            <person name="Muendlein A."/>
            <person name="Felber R."/>
            <person name="Schnabl S."/>
            <person name="Hiller R."/>
            <person name="Schmidt W."/>
            <person name="Lecharny A."/>
            <person name="Aubourg S."/>
            <person name="Chefdor F."/>
            <person name="Cooke R."/>
            <person name="Berger C."/>
            <person name="Monfort A."/>
            <person name="Casacuberta E."/>
            <person name="Gibbons T."/>
            <person name="Weber N."/>
            <person name="Vandenbol M."/>
            <person name="Bargues M."/>
            <person name="Terol J."/>
            <person name="Torres A."/>
            <person name="Perez-Perez A."/>
            <person name="Purnelle B."/>
            <person name="Bent E."/>
            <person name="Johnson S."/>
            <person name="Tacon D."/>
            <person name="Jesse T."/>
            <person name="Heijnen L."/>
            <person name="Schwarz S."/>
            <person name="Scholler P."/>
            <person name="Heber S."/>
            <person name="Francs P."/>
            <person name="Bielke C."/>
            <person name="Frishman D."/>
            <person name="Haase D."/>
            <person name="Lemcke K."/>
            <person name="Mewes H.-W."/>
            <person name="Stocker S."/>
            <person name="Zaccaria P."/>
            <person name="Bevan M."/>
            <person name="Wilson R.K."/>
            <person name="de la Bastide M."/>
            <person name="Habermann K."/>
            <person name="Parnell L."/>
            <person name="Dedhia N."/>
            <person name="Gnoj L."/>
            <person name="Schutz K."/>
            <person name="Huang E."/>
            <person name="Spiegel L."/>
            <person name="Sekhon M."/>
            <person name="Murray J."/>
            <person name="Sheet P."/>
            <person name="Cordes M."/>
            <person name="Abu-Threideh J."/>
            <person name="Stoneking T."/>
            <person name="Kalicki J."/>
            <person name="Graves T."/>
            <person name="Harmon G."/>
            <person name="Edwards J."/>
            <person name="Latreille P."/>
            <person name="Courtney L."/>
            <person name="Cloud J."/>
            <person name="Abbott A."/>
            <person name="Scott K."/>
            <person name="Johnson D."/>
            <person name="Minx P."/>
            <person name="Bentley D."/>
            <person name="Fulton B."/>
            <person name="Miller N."/>
            <person name="Greco T."/>
            <person name="Kemp K."/>
            <person name="Kramer J."/>
            <person name="Fulton L."/>
            <person name="Mardis E."/>
            <person name="Dante M."/>
            <person name="Pepin K."/>
            <person name="Hillier L.W."/>
            <person name="Nelson J."/>
            <person name="Spieth J."/>
            <person name="Ryan E."/>
            <person name="Andrews S."/>
            <person name="Geisel C."/>
            <person name="Layman D."/>
            <person name="Du H."/>
            <person name="Ali J."/>
            <person name="Berghoff A."/>
            <person name="Jones K."/>
            <person name="Drone K."/>
            <person name="Cotton M."/>
            <person name="Joshu C."/>
            <person name="Antonoiu B."/>
            <person name="Zidanic M."/>
            <person name="Strong C."/>
            <person name="Sun H."/>
            <person name="Lamar B."/>
            <person name="Yordan C."/>
            <person name="Ma P."/>
            <person name="Zhong J."/>
            <person name="Preston R."/>
            <person name="Vil D."/>
            <person name="Shekher M."/>
            <person name="Matero A."/>
            <person name="Shah R."/>
            <person name="Swaby I.K."/>
            <person name="O'Shaughnessy A."/>
            <person name="Rodriguez M."/>
            <person name="Hoffman J."/>
            <person name="Till S."/>
            <person name="Granat S."/>
            <person name="Shohdy N."/>
            <person name="Hasegawa A."/>
            <person name="Hameed A."/>
            <person name="Lodhi M."/>
            <person name="Johnson A."/>
            <person name="Chen E."/>
            <person name="Marra M.A."/>
            <person name="Martienssen R."/>
            <person name="McCombie W.R."/>
        </authorList>
    </citation>
    <scope>NUCLEOTIDE SEQUENCE [LARGE SCALE GENOMIC DNA]</scope>
    <source>
        <strain>cv. Columbia</strain>
    </source>
</reference>
<reference key="4">
    <citation type="journal article" date="2017" name="Plant J.">
        <title>Araport11: a complete reannotation of the Arabidopsis thaliana reference genome.</title>
        <authorList>
            <person name="Cheng C.Y."/>
            <person name="Krishnakumar V."/>
            <person name="Chan A.P."/>
            <person name="Thibaud-Nissen F."/>
            <person name="Schobel S."/>
            <person name="Town C.D."/>
        </authorList>
    </citation>
    <scope>GENOME REANNOTATION</scope>
    <source>
        <strain>cv. Columbia</strain>
    </source>
</reference>
<reference key="5">
    <citation type="submission" date="2003-12" db="EMBL/GenBank/DDBJ databases">
        <title>Arabidopsis ORF clones.</title>
        <authorList>
            <person name="Kim C.J."/>
            <person name="Chen H."/>
            <person name="Cheuk R."/>
            <person name="Shinn P."/>
            <person name="Ecker J.R."/>
        </authorList>
    </citation>
    <scope>NUCLEOTIDE SEQUENCE [LARGE SCALE MRNA] (ISOFORM 1)</scope>
</reference>
<reference key="6">
    <citation type="journal article" date="2004" name="Plant J.">
        <title>Efficient discovery of DNA polymorphisms in natural populations by Ecotilling.</title>
        <authorList>
            <person name="Comai L."/>
            <person name="Young K."/>
            <person name="Till B.J."/>
            <person name="Reynolds S.H."/>
            <person name="Greene E.A."/>
            <person name="Codomo C.A."/>
            <person name="Enns L.C."/>
            <person name="Johnson J.E."/>
            <person name="Burtner C."/>
            <person name="Odden A.R."/>
            <person name="Henikoff S."/>
        </authorList>
    </citation>
    <scope>NUCLEOTIDE SEQUENCE [GENOMIC DNA] OF 144-287</scope>
    <source>
        <strain>cv. Cit-0</strain>
        <strain>cv. Columbia</strain>
        <strain>cv. Ct-1</strain>
        <strain>cv. Gd-1</strain>
        <strain>cv. Gr-1</strain>
        <strain>cv. Ita-0</strain>
        <strain>cv. Kr-0</strain>
    </source>
</reference>
<reference key="7">
    <citation type="journal article" date="2003" name="J. Biol. Chem.">
        <title>Biochemical characterization of an exonuclease from Arabidopsis thaliana reveals similarities to the DNA exonuclease of the human Werner syndrome protein.</title>
        <authorList>
            <person name="Plchova H."/>
            <person name="Hartung F."/>
            <person name="Puchta H."/>
        </authorList>
    </citation>
    <scope>FUNCTION</scope>
    <scope>COFACTOR</scope>
    <scope>MUTAGENESIS OF GLU-135</scope>
</reference>
<reference key="8">
    <citation type="journal article" date="2005" name="Nucleic Acids Res.">
        <title>A conserved and species-specific functional interaction between the Werner syndrome-like exonuclease atWEX and the Ku heterodimer in Arabidopsis.</title>
        <authorList>
            <person name="Li B."/>
            <person name="Conway N."/>
            <person name="Navarro S."/>
            <person name="Comai L."/>
            <person name="Comai L."/>
        </authorList>
    </citation>
    <scope>INTERACTION WITH KU70 AND KU80</scope>
    <scope>ACTIVITY REGULATION</scope>
</reference>
<accession>Q84LH3</accession>
<accession>Q6QPM3</accession>
<accession>Q9FT68</accession>
<accession>Q9SVM6</accession>
<dbReference type="EC" id="3.1.-.-" evidence="4"/>
<dbReference type="EMBL" id="AJ404476">
    <property type="protein sequence ID" value="CAC14871.1"/>
    <property type="molecule type" value="mRNA"/>
</dbReference>
<dbReference type="EMBL" id="AF531179">
    <property type="protein sequence ID" value="AAO33765.1"/>
    <property type="molecule type" value="mRNA"/>
</dbReference>
<dbReference type="EMBL" id="AL035528">
    <property type="protein sequence ID" value="CAB36851.1"/>
    <property type="status" value="ALT_SEQ"/>
    <property type="molecule type" value="Genomic_DNA"/>
</dbReference>
<dbReference type="EMBL" id="AL161537">
    <property type="protein sequence ID" value="CAB78429.1"/>
    <property type="status" value="ALT_SEQ"/>
    <property type="molecule type" value="Genomic_DNA"/>
</dbReference>
<dbReference type="EMBL" id="CP002687">
    <property type="protein sequence ID" value="AEE83338.1"/>
    <property type="molecule type" value="Genomic_DNA"/>
</dbReference>
<dbReference type="EMBL" id="CP002687">
    <property type="protein sequence ID" value="AEE83339.1"/>
    <property type="molecule type" value="Genomic_DNA"/>
</dbReference>
<dbReference type="EMBL" id="BT010908">
    <property type="protein sequence ID" value="AAR24686.1"/>
    <property type="molecule type" value="mRNA"/>
</dbReference>
<dbReference type="EMBL" id="AY530745">
    <property type="protein sequence ID" value="AAS45430.1"/>
    <property type="molecule type" value="Genomic_DNA"/>
</dbReference>
<dbReference type="PIR" id="T05256">
    <property type="entry name" value="T05256"/>
</dbReference>
<dbReference type="RefSeq" id="NP_193123.2">
    <molecule id="Q84LH3-2"/>
    <property type="nucleotide sequence ID" value="NM_117461.2"/>
</dbReference>
<dbReference type="RefSeq" id="NP_974543.1">
    <molecule id="Q84LH3-1"/>
    <property type="nucleotide sequence ID" value="NM_202814.2"/>
</dbReference>
<dbReference type="SMR" id="Q84LH3"/>
<dbReference type="BioGRID" id="12318">
    <property type="interactions" value="1"/>
</dbReference>
<dbReference type="FunCoup" id="Q84LH3">
    <property type="interactions" value="71"/>
</dbReference>
<dbReference type="IntAct" id="Q84LH3">
    <property type="interactions" value="3"/>
</dbReference>
<dbReference type="STRING" id="3702.Q84LH3"/>
<dbReference type="PaxDb" id="3702-AT4G13870.2"/>
<dbReference type="EnsemblPlants" id="AT4G13870.1">
    <molecule id="Q84LH3-2"/>
    <property type="protein sequence ID" value="AT4G13870.1"/>
    <property type="gene ID" value="AT4G13870"/>
</dbReference>
<dbReference type="EnsemblPlants" id="AT4G13870.2">
    <molecule id="Q84LH3-1"/>
    <property type="protein sequence ID" value="AT4G13870.2"/>
    <property type="gene ID" value="AT4G13870"/>
</dbReference>
<dbReference type="GeneID" id="827021"/>
<dbReference type="Gramene" id="AT4G13870.1">
    <molecule id="Q84LH3-2"/>
    <property type="protein sequence ID" value="AT4G13870.1"/>
    <property type="gene ID" value="AT4G13870"/>
</dbReference>
<dbReference type="Gramene" id="AT4G13870.2">
    <molecule id="Q84LH3-1"/>
    <property type="protein sequence ID" value="AT4G13870.2"/>
    <property type="gene ID" value="AT4G13870"/>
</dbReference>
<dbReference type="KEGG" id="ath:AT4G13870"/>
<dbReference type="Araport" id="AT4G13870"/>
<dbReference type="TAIR" id="AT4G13870">
    <property type="gene designation" value="WRNEXO"/>
</dbReference>
<dbReference type="eggNOG" id="KOG4373">
    <property type="taxonomic scope" value="Eukaryota"/>
</dbReference>
<dbReference type="InParanoid" id="Q84LH3"/>
<dbReference type="OMA" id="CCYVYQL"/>
<dbReference type="PhylomeDB" id="Q84LH3"/>
<dbReference type="PRO" id="PR:Q84LH3"/>
<dbReference type="Proteomes" id="UP000006548">
    <property type="component" value="Chromosome 4"/>
</dbReference>
<dbReference type="ExpressionAtlas" id="Q84LH3">
    <property type="expression patterns" value="baseline and differential"/>
</dbReference>
<dbReference type="GO" id="GO:0005634">
    <property type="term" value="C:nucleus"/>
    <property type="evidence" value="ECO:0007669"/>
    <property type="project" value="UniProtKB-SubCell"/>
</dbReference>
<dbReference type="GO" id="GO:0008408">
    <property type="term" value="F:3'-5' exonuclease activity"/>
    <property type="evidence" value="ECO:0000314"/>
    <property type="project" value="UniProtKB"/>
</dbReference>
<dbReference type="GO" id="GO:0003677">
    <property type="term" value="F:DNA binding"/>
    <property type="evidence" value="ECO:0007669"/>
    <property type="project" value="UniProtKB-KW"/>
</dbReference>
<dbReference type="GO" id="GO:0046872">
    <property type="term" value="F:metal ion binding"/>
    <property type="evidence" value="ECO:0007669"/>
    <property type="project" value="UniProtKB-KW"/>
</dbReference>
<dbReference type="GO" id="GO:0006139">
    <property type="term" value="P:nucleobase-containing compound metabolic process"/>
    <property type="evidence" value="ECO:0007669"/>
    <property type="project" value="InterPro"/>
</dbReference>
<dbReference type="CDD" id="cd06141">
    <property type="entry name" value="WRN_exo"/>
    <property type="match status" value="1"/>
</dbReference>
<dbReference type="FunFam" id="3.30.420.10:FF:000114">
    <property type="entry name" value="Werner Syndrome-like exonuclease"/>
    <property type="match status" value="1"/>
</dbReference>
<dbReference type="Gene3D" id="3.30.420.10">
    <property type="entry name" value="Ribonuclease H-like superfamily/Ribonuclease H"/>
    <property type="match status" value="1"/>
</dbReference>
<dbReference type="InterPro" id="IPR002562">
    <property type="entry name" value="3'-5'_exonuclease_dom"/>
</dbReference>
<dbReference type="InterPro" id="IPR051132">
    <property type="entry name" value="3-5_Exonuclease_domain"/>
</dbReference>
<dbReference type="InterPro" id="IPR012337">
    <property type="entry name" value="RNaseH-like_sf"/>
</dbReference>
<dbReference type="InterPro" id="IPR036397">
    <property type="entry name" value="RNaseH_sf"/>
</dbReference>
<dbReference type="PANTHER" id="PTHR13620:SF109">
    <property type="entry name" value="3'-5' EXONUCLEASE"/>
    <property type="match status" value="1"/>
</dbReference>
<dbReference type="PANTHER" id="PTHR13620">
    <property type="entry name" value="3-5 EXONUCLEASE"/>
    <property type="match status" value="1"/>
</dbReference>
<dbReference type="Pfam" id="PF01612">
    <property type="entry name" value="DNA_pol_A_exo1"/>
    <property type="match status" value="1"/>
</dbReference>
<dbReference type="SMART" id="SM00474">
    <property type="entry name" value="35EXOc"/>
    <property type="match status" value="1"/>
</dbReference>
<dbReference type="SUPFAM" id="SSF53098">
    <property type="entry name" value="Ribonuclease H-like"/>
    <property type="match status" value="1"/>
</dbReference>
<sequence>MSSSNWIDDAFTEEELLAIDAIEASYNFSRSSSSSSSAAPTVQATTSVHGHEEDPNQIPNNIRRQLPRSITSSTSYKRFPLSRCRARNFPAMRFGGRILYSKTATEVDKRAMQLIKVLDTKRDESGIAFVGLDIEWRPSFRKGVLPGKVATVQICVDSNYCDVMHIFHSGIPQSLQHLIEDSTLVKVGIGIDGDSVKLFHDYGVSIKDVEDLSDLANQKIGGDKKWGLASLTETLVCKELLKPNRIRLGNWEFYPLSKQQLQYAATDAYASWHLYKVLKDLPDAVSGS</sequence>
<evidence type="ECO:0000256" key="1">
    <source>
        <dbReference type="SAM" id="MobiDB-lite"/>
    </source>
</evidence>
<evidence type="ECO:0000269" key="2">
    <source>
    </source>
</evidence>
<evidence type="ECO:0000269" key="3">
    <source>
    </source>
</evidence>
<evidence type="ECO:0000269" key="4">
    <source>
    </source>
</evidence>
<evidence type="ECO:0000269" key="5">
    <source>
    </source>
</evidence>
<evidence type="ECO:0000303" key="6">
    <source>
    </source>
</evidence>
<evidence type="ECO:0000303" key="7">
    <source>
    </source>
</evidence>
<evidence type="ECO:0000305" key="8"/>
<name>WEX_ARATH</name>
<proteinExistence type="evidence at protein level"/>
<gene>
    <name type="primary">WEX</name>
    <name type="synonym">WRNEXO</name>
    <name type="ordered locus">At4g13870</name>
    <name type="ORF">F18A5.260</name>
</gene>
<protein>
    <recommendedName>
        <fullName evidence="7">3'-5' exonuclease</fullName>
        <ecNumber evidence="4">3.1.-.-</ecNumber>
    </recommendedName>
    <alternativeName>
        <fullName>Werner Syndrome-like exonuclease</fullName>
    </alternativeName>
</protein>
<keyword id="KW-0025">Alternative splicing</keyword>
<keyword id="KW-0238">DNA-binding</keyword>
<keyword id="KW-0269">Exonuclease</keyword>
<keyword id="KW-0378">Hydrolase</keyword>
<keyword id="KW-0460">Magnesium</keyword>
<keyword id="KW-0464">Manganese</keyword>
<keyword id="KW-0479">Metal-binding</keyword>
<keyword id="KW-0540">Nuclease</keyword>
<keyword id="KW-0539">Nucleus</keyword>
<keyword id="KW-1185">Reference proteome</keyword>